<sequence>MSALVPPVLLASSSPSRGRLLSEAGVPFTAAAPGVDEQAIKASLKAEGVSARDAAIHLGEWKARRLSLAHPQALVIGGDQIAAIDDLWLDKPGSLATARQHLLLLRGRTHVLETAVVVLRDGQRLWHHLARPKMTMRSFSDAFLEDYLDRAGAGITACAGAYQIEGLGLQLFAAIEGDLFSIQGLPLLPLLDFLRPHGVLLS</sequence>
<gene>
    <name type="ordered locus">Rru_A3614</name>
</gene>
<protein>
    <recommendedName>
        <fullName evidence="1">Nucleoside triphosphate pyrophosphatase</fullName>
        <ecNumber evidence="1">3.6.1.9</ecNumber>
    </recommendedName>
    <alternativeName>
        <fullName evidence="1">Nucleotide pyrophosphatase</fullName>
        <shortName evidence="1">Nucleotide PPase</shortName>
    </alternativeName>
</protein>
<keyword id="KW-0963">Cytoplasm</keyword>
<keyword id="KW-0378">Hydrolase</keyword>
<keyword id="KW-0546">Nucleotide metabolism</keyword>
<keyword id="KW-1185">Reference proteome</keyword>
<organism>
    <name type="scientific">Rhodospirillum rubrum (strain ATCC 11170 / ATH 1.1.1 / DSM 467 / LMG 4362 / NCIMB 8255 / S1)</name>
    <dbReference type="NCBI Taxonomy" id="269796"/>
    <lineage>
        <taxon>Bacteria</taxon>
        <taxon>Pseudomonadati</taxon>
        <taxon>Pseudomonadota</taxon>
        <taxon>Alphaproteobacteria</taxon>
        <taxon>Rhodospirillales</taxon>
        <taxon>Rhodospirillaceae</taxon>
        <taxon>Rhodospirillum</taxon>
    </lineage>
</organism>
<accession>Q2RN87</accession>
<evidence type="ECO:0000255" key="1">
    <source>
        <dbReference type="HAMAP-Rule" id="MF_00528"/>
    </source>
</evidence>
<name>NTPP_RHORT</name>
<reference key="1">
    <citation type="journal article" date="2011" name="Stand. Genomic Sci.">
        <title>Complete genome sequence of Rhodospirillum rubrum type strain (S1).</title>
        <authorList>
            <person name="Munk A.C."/>
            <person name="Copeland A."/>
            <person name="Lucas S."/>
            <person name="Lapidus A."/>
            <person name="Del Rio T.G."/>
            <person name="Barry K."/>
            <person name="Detter J.C."/>
            <person name="Hammon N."/>
            <person name="Israni S."/>
            <person name="Pitluck S."/>
            <person name="Brettin T."/>
            <person name="Bruce D."/>
            <person name="Han C."/>
            <person name="Tapia R."/>
            <person name="Gilna P."/>
            <person name="Schmutz J."/>
            <person name="Larimer F."/>
            <person name="Land M."/>
            <person name="Kyrpides N.C."/>
            <person name="Mavromatis K."/>
            <person name="Richardson P."/>
            <person name="Rohde M."/>
            <person name="Goeker M."/>
            <person name="Klenk H.P."/>
            <person name="Zhang Y."/>
            <person name="Roberts G.P."/>
            <person name="Reslewic S."/>
            <person name="Schwartz D.C."/>
        </authorList>
    </citation>
    <scope>NUCLEOTIDE SEQUENCE [LARGE SCALE GENOMIC DNA]</scope>
    <source>
        <strain>ATCC 11170 / ATH 1.1.1 / DSM 467 / LMG 4362 / NCIMB 8255 / S1</strain>
    </source>
</reference>
<proteinExistence type="inferred from homology"/>
<dbReference type="EC" id="3.6.1.9" evidence="1"/>
<dbReference type="EMBL" id="CP000230">
    <property type="protein sequence ID" value="ABC24408.1"/>
    <property type="molecule type" value="Genomic_DNA"/>
</dbReference>
<dbReference type="RefSeq" id="WP_011391361.1">
    <property type="nucleotide sequence ID" value="NC_007643.1"/>
</dbReference>
<dbReference type="RefSeq" id="YP_428695.1">
    <property type="nucleotide sequence ID" value="NC_007643.1"/>
</dbReference>
<dbReference type="SMR" id="Q2RN87"/>
<dbReference type="STRING" id="269796.Rru_A3614"/>
<dbReference type="EnsemblBacteria" id="ABC24408">
    <property type="protein sequence ID" value="ABC24408"/>
    <property type="gene ID" value="Rru_A3614"/>
</dbReference>
<dbReference type="KEGG" id="rru:Rru_A3614"/>
<dbReference type="PATRIC" id="fig|269796.9.peg.3735"/>
<dbReference type="eggNOG" id="COG0424">
    <property type="taxonomic scope" value="Bacteria"/>
</dbReference>
<dbReference type="HOGENOM" id="CLU_040416_1_1_5"/>
<dbReference type="PhylomeDB" id="Q2RN87"/>
<dbReference type="Proteomes" id="UP000001929">
    <property type="component" value="Chromosome"/>
</dbReference>
<dbReference type="GO" id="GO:0005737">
    <property type="term" value="C:cytoplasm"/>
    <property type="evidence" value="ECO:0007669"/>
    <property type="project" value="UniProtKB-SubCell"/>
</dbReference>
<dbReference type="GO" id="GO:0047429">
    <property type="term" value="F:nucleoside triphosphate diphosphatase activity"/>
    <property type="evidence" value="ECO:0007669"/>
    <property type="project" value="UniProtKB-EC"/>
</dbReference>
<dbReference type="GO" id="GO:0009117">
    <property type="term" value="P:nucleotide metabolic process"/>
    <property type="evidence" value="ECO:0007669"/>
    <property type="project" value="UniProtKB-KW"/>
</dbReference>
<dbReference type="CDD" id="cd00555">
    <property type="entry name" value="Maf"/>
    <property type="match status" value="1"/>
</dbReference>
<dbReference type="Gene3D" id="3.90.950.10">
    <property type="match status" value="1"/>
</dbReference>
<dbReference type="HAMAP" id="MF_00528">
    <property type="entry name" value="Maf"/>
    <property type="match status" value="1"/>
</dbReference>
<dbReference type="InterPro" id="IPR029001">
    <property type="entry name" value="ITPase-like_fam"/>
</dbReference>
<dbReference type="InterPro" id="IPR003697">
    <property type="entry name" value="Maf-like"/>
</dbReference>
<dbReference type="PANTHER" id="PTHR43213">
    <property type="entry name" value="BIFUNCTIONAL DTTP/UTP PYROPHOSPHATASE/METHYLTRANSFERASE PROTEIN-RELATED"/>
    <property type="match status" value="1"/>
</dbReference>
<dbReference type="PANTHER" id="PTHR43213:SF5">
    <property type="entry name" value="BIFUNCTIONAL DTTP_UTP PYROPHOSPHATASE_METHYLTRANSFERASE PROTEIN-RELATED"/>
    <property type="match status" value="1"/>
</dbReference>
<dbReference type="Pfam" id="PF02545">
    <property type="entry name" value="Maf"/>
    <property type="match status" value="1"/>
</dbReference>
<dbReference type="PIRSF" id="PIRSF006305">
    <property type="entry name" value="Maf"/>
    <property type="match status" value="1"/>
</dbReference>
<dbReference type="SUPFAM" id="SSF52972">
    <property type="entry name" value="ITPase-like"/>
    <property type="match status" value="1"/>
</dbReference>
<comment type="function">
    <text evidence="1">Nucleoside triphosphate pyrophosphatase. May have a dual role in cell division arrest and in preventing the incorporation of modified nucleotides into cellular nucleic acids.</text>
</comment>
<comment type="catalytic activity">
    <reaction evidence="1">
        <text>a ribonucleoside 5'-triphosphate + H2O = a ribonucleoside 5'-phosphate + diphosphate + H(+)</text>
        <dbReference type="Rhea" id="RHEA:23996"/>
        <dbReference type="ChEBI" id="CHEBI:15377"/>
        <dbReference type="ChEBI" id="CHEBI:15378"/>
        <dbReference type="ChEBI" id="CHEBI:33019"/>
        <dbReference type="ChEBI" id="CHEBI:58043"/>
        <dbReference type="ChEBI" id="CHEBI:61557"/>
        <dbReference type="EC" id="3.6.1.9"/>
    </reaction>
</comment>
<comment type="catalytic activity">
    <reaction evidence="1">
        <text>a 2'-deoxyribonucleoside 5'-triphosphate + H2O = a 2'-deoxyribonucleoside 5'-phosphate + diphosphate + H(+)</text>
        <dbReference type="Rhea" id="RHEA:44644"/>
        <dbReference type="ChEBI" id="CHEBI:15377"/>
        <dbReference type="ChEBI" id="CHEBI:15378"/>
        <dbReference type="ChEBI" id="CHEBI:33019"/>
        <dbReference type="ChEBI" id="CHEBI:61560"/>
        <dbReference type="ChEBI" id="CHEBI:65317"/>
        <dbReference type="EC" id="3.6.1.9"/>
    </reaction>
</comment>
<comment type="cofactor">
    <cofactor evidence="1">
        <name>a divalent metal cation</name>
        <dbReference type="ChEBI" id="CHEBI:60240"/>
    </cofactor>
</comment>
<comment type="subcellular location">
    <subcellularLocation>
        <location evidence="1">Cytoplasm</location>
    </subcellularLocation>
</comment>
<comment type="similarity">
    <text evidence="1">Belongs to the Maf family.</text>
</comment>
<feature type="chain" id="PRO_0000267409" description="Nucleoside triphosphate pyrophosphatase">
    <location>
        <begin position="1"/>
        <end position="202"/>
    </location>
</feature>
<feature type="active site" description="Proton acceptor" evidence="1">
    <location>
        <position position="79"/>
    </location>
</feature>